<name>XERC_BACLD</name>
<proteinExistence type="inferred from homology"/>
<organism>
    <name type="scientific">Bacillus licheniformis (strain ATCC 14580 / DSM 13 / JCM 2505 / CCUG 7422 / NBRC 12200 / NCIMB 9375 / NCTC 10341 / NRRL NRS-1264 / Gibson 46)</name>
    <dbReference type="NCBI Taxonomy" id="279010"/>
    <lineage>
        <taxon>Bacteria</taxon>
        <taxon>Bacillati</taxon>
        <taxon>Bacillota</taxon>
        <taxon>Bacilli</taxon>
        <taxon>Bacillales</taxon>
        <taxon>Bacillaceae</taxon>
        <taxon>Bacillus</taxon>
    </lineage>
</organism>
<feature type="chain" id="PRO_1000073665" description="Tyrosine recombinase XerC">
    <location>
        <begin position="1"/>
        <end position="304"/>
    </location>
</feature>
<feature type="domain" description="Core-binding (CB)" evidence="3">
    <location>
        <begin position="2"/>
        <end position="88"/>
    </location>
</feature>
<feature type="domain" description="Tyr recombinase" evidence="2">
    <location>
        <begin position="109"/>
        <end position="294"/>
    </location>
</feature>
<feature type="active site" evidence="1">
    <location>
        <position position="149"/>
    </location>
</feature>
<feature type="active site" evidence="1">
    <location>
        <position position="173"/>
    </location>
</feature>
<feature type="active site" evidence="1">
    <location>
        <position position="246"/>
    </location>
</feature>
<feature type="active site" evidence="1">
    <location>
        <position position="249"/>
    </location>
</feature>
<feature type="active site" evidence="1">
    <location>
        <position position="272"/>
    </location>
</feature>
<feature type="active site" description="O-(3'-phospho-DNA)-tyrosine intermediate" evidence="1">
    <location>
        <position position="281"/>
    </location>
</feature>
<gene>
    <name evidence="1" type="primary">xerC</name>
    <name type="ordered locus">BLi01834</name>
    <name type="ordered locus">BL01279</name>
</gene>
<keyword id="KW-0131">Cell cycle</keyword>
<keyword id="KW-0132">Cell division</keyword>
<keyword id="KW-0159">Chromosome partition</keyword>
<keyword id="KW-0963">Cytoplasm</keyword>
<keyword id="KW-0229">DNA integration</keyword>
<keyword id="KW-0233">DNA recombination</keyword>
<keyword id="KW-0238">DNA-binding</keyword>
<keyword id="KW-1185">Reference proteome</keyword>
<accession>Q65JN5</accession>
<accession>Q62V40</accession>
<comment type="function">
    <text evidence="1">Site-specific tyrosine recombinase, which acts by catalyzing the cutting and rejoining of the recombining DNA molecules. The XerC-XerD complex is essential to convert dimers of the bacterial chromosome into monomers to permit their segregation at cell division. It also contributes to the segregational stability of plasmids.</text>
</comment>
<comment type="subunit">
    <text evidence="1">Forms a cyclic heterotetrameric complex composed of two molecules of XerC and two molecules of XerD.</text>
</comment>
<comment type="subcellular location">
    <subcellularLocation>
        <location evidence="1">Cytoplasm</location>
    </subcellularLocation>
</comment>
<comment type="similarity">
    <text evidence="1">Belongs to the 'phage' integrase family. XerC subfamily.</text>
</comment>
<dbReference type="EMBL" id="CP000002">
    <property type="protein sequence ID" value="AAU23369.1"/>
    <property type="molecule type" value="Genomic_DNA"/>
</dbReference>
<dbReference type="EMBL" id="AE017333">
    <property type="protein sequence ID" value="AAU40729.1"/>
    <property type="molecule type" value="Genomic_DNA"/>
</dbReference>
<dbReference type="RefSeq" id="WP_011197974.1">
    <property type="nucleotide sequence ID" value="NC_006322.1"/>
</dbReference>
<dbReference type="SMR" id="Q65JN5"/>
<dbReference type="STRING" id="279010.BL01279"/>
<dbReference type="GeneID" id="92861573"/>
<dbReference type="KEGG" id="bld:BLi01834"/>
<dbReference type="KEGG" id="bli:BL01279"/>
<dbReference type="eggNOG" id="COG4974">
    <property type="taxonomic scope" value="Bacteria"/>
</dbReference>
<dbReference type="HOGENOM" id="CLU_027562_9_0_9"/>
<dbReference type="Proteomes" id="UP000000606">
    <property type="component" value="Chromosome"/>
</dbReference>
<dbReference type="GO" id="GO:0005737">
    <property type="term" value="C:cytoplasm"/>
    <property type="evidence" value="ECO:0007669"/>
    <property type="project" value="UniProtKB-SubCell"/>
</dbReference>
<dbReference type="GO" id="GO:0003677">
    <property type="term" value="F:DNA binding"/>
    <property type="evidence" value="ECO:0007669"/>
    <property type="project" value="UniProtKB-KW"/>
</dbReference>
<dbReference type="GO" id="GO:0009037">
    <property type="term" value="F:tyrosine-based site-specific recombinase activity"/>
    <property type="evidence" value="ECO:0007669"/>
    <property type="project" value="UniProtKB-UniRule"/>
</dbReference>
<dbReference type="GO" id="GO:0051301">
    <property type="term" value="P:cell division"/>
    <property type="evidence" value="ECO:0007669"/>
    <property type="project" value="UniProtKB-KW"/>
</dbReference>
<dbReference type="GO" id="GO:0007059">
    <property type="term" value="P:chromosome segregation"/>
    <property type="evidence" value="ECO:0007669"/>
    <property type="project" value="UniProtKB-UniRule"/>
</dbReference>
<dbReference type="GO" id="GO:0006313">
    <property type="term" value="P:DNA transposition"/>
    <property type="evidence" value="ECO:0007669"/>
    <property type="project" value="UniProtKB-UniRule"/>
</dbReference>
<dbReference type="CDD" id="cd00798">
    <property type="entry name" value="INT_XerDC_C"/>
    <property type="match status" value="1"/>
</dbReference>
<dbReference type="Gene3D" id="1.10.150.130">
    <property type="match status" value="1"/>
</dbReference>
<dbReference type="Gene3D" id="1.10.443.10">
    <property type="entry name" value="Intergrase catalytic core"/>
    <property type="match status" value="1"/>
</dbReference>
<dbReference type="HAMAP" id="MF_01808">
    <property type="entry name" value="Recomb_XerC_XerD"/>
    <property type="match status" value="1"/>
</dbReference>
<dbReference type="InterPro" id="IPR044068">
    <property type="entry name" value="CB"/>
</dbReference>
<dbReference type="InterPro" id="IPR011010">
    <property type="entry name" value="DNA_brk_join_enz"/>
</dbReference>
<dbReference type="InterPro" id="IPR013762">
    <property type="entry name" value="Integrase-like_cat_sf"/>
</dbReference>
<dbReference type="InterPro" id="IPR002104">
    <property type="entry name" value="Integrase_catalytic"/>
</dbReference>
<dbReference type="InterPro" id="IPR010998">
    <property type="entry name" value="Integrase_recombinase_N"/>
</dbReference>
<dbReference type="InterPro" id="IPR004107">
    <property type="entry name" value="Integrase_SAM-like_N"/>
</dbReference>
<dbReference type="InterPro" id="IPR011931">
    <property type="entry name" value="Recomb_XerC"/>
</dbReference>
<dbReference type="InterPro" id="IPR023009">
    <property type="entry name" value="Tyrosine_recombinase_XerC/XerD"/>
</dbReference>
<dbReference type="InterPro" id="IPR050090">
    <property type="entry name" value="Tyrosine_recombinase_XerCD"/>
</dbReference>
<dbReference type="NCBIfam" id="NF001399">
    <property type="entry name" value="PRK00283.1"/>
    <property type="match status" value="1"/>
</dbReference>
<dbReference type="NCBIfam" id="TIGR02224">
    <property type="entry name" value="recomb_XerC"/>
    <property type="match status" value="1"/>
</dbReference>
<dbReference type="PANTHER" id="PTHR30349">
    <property type="entry name" value="PHAGE INTEGRASE-RELATED"/>
    <property type="match status" value="1"/>
</dbReference>
<dbReference type="PANTHER" id="PTHR30349:SF77">
    <property type="entry name" value="TYROSINE RECOMBINASE XERC"/>
    <property type="match status" value="1"/>
</dbReference>
<dbReference type="Pfam" id="PF02899">
    <property type="entry name" value="Phage_int_SAM_1"/>
    <property type="match status" value="1"/>
</dbReference>
<dbReference type="Pfam" id="PF00589">
    <property type="entry name" value="Phage_integrase"/>
    <property type="match status" value="1"/>
</dbReference>
<dbReference type="SUPFAM" id="SSF56349">
    <property type="entry name" value="DNA breaking-rejoining enzymes"/>
    <property type="match status" value="1"/>
</dbReference>
<dbReference type="PROSITE" id="PS51900">
    <property type="entry name" value="CB"/>
    <property type="match status" value="1"/>
</dbReference>
<dbReference type="PROSITE" id="PS51898">
    <property type="entry name" value="TYR_RECOMBINASE"/>
    <property type="match status" value="1"/>
</dbReference>
<reference key="1">
    <citation type="journal article" date="2004" name="J. Mol. Microbiol. Biotechnol.">
        <title>The complete genome sequence of Bacillus licheniformis DSM13, an organism with great industrial potential.</title>
        <authorList>
            <person name="Veith B."/>
            <person name="Herzberg C."/>
            <person name="Steckel S."/>
            <person name="Feesche J."/>
            <person name="Maurer K.H."/>
            <person name="Ehrenreich P."/>
            <person name="Baeumer S."/>
            <person name="Henne A."/>
            <person name="Liesegang H."/>
            <person name="Merkl R."/>
            <person name="Ehrenreich A."/>
            <person name="Gottschalk G."/>
        </authorList>
    </citation>
    <scope>NUCLEOTIDE SEQUENCE [LARGE SCALE GENOMIC DNA]</scope>
    <source>
        <strain>ATCC 14580 / DSM 13 / JCM 2505 / CCUG 7422 / NBRC 12200 / NCIMB 9375 / NCTC 10341 / NRRL NRS-1264 / Gibson 46</strain>
    </source>
</reference>
<reference key="2">
    <citation type="journal article" date="2004" name="Genome Biol.">
        <title>Complete genome sequence of the industrial bacterium Bacillus licheniformis and comparisons with closely related Bacillus species.</title>
        <authorList>
            <person name="Rey M.W."/>
            <person name="Ramaiya P."/>
            <person name="Nelson B.A."/>
            <person name="Brody-Karpin S.D."/>
            <person name="Zaretsky E.J."/>
            <person name="Tang M."/>
            <person name="Lopez de Leon A."/>
            <person name="Xiang H."/>
            <person name="Gusti V."/>
            <person name="Clausen I.G."/>
            <person name="Olsen P.B."/>
            <person name="Rasmussen M.D."/>
            <person name="Andersen J.T."/>
            <person name="Joergensen P.L."/>
            <person name="Larsen T.S."/>
            <person name="Sorokin A."/>
            <person name="Bolotin A."/>
            <person name="Lapidus A."/>
            <person name="Galleron N."/>
            <person name="Ehrlich S.D."/>
            <person name="Berka R.M."/>
        </authorList>
    </citation>
    <scope>NUCLEOTIDE SEQUENCE [LARGE SCALE GENOMIC DNA]</scope>
    <source>
        <strain>ATCC 14580 / DSM 13 / JCM 2505 / CCUG 7422 / NBRC 12200 / NCIMB 9375 / NCTC 10341 / NRRL NRS-1264 / Gibson 46</strain>
    </source>
</reference>
<protein>
    <recommendedName>
        <fullName evidence="1">Tyrosine recombinase XerC</fullName>
    </recommendedName>
</protein>
<evidence type="ECO:0000255" key="1">
    <source>
        <dbReference type="HAMAP-Rule" id="MF_01808"/>
    </source>
</evidence>
<evidence type="ECO:0000255" key="2">
    <source>
        <dbReference type="PROSITE-ProRule" id="PRU01246"/>
    </source>
</evidence>
<evidence type="ECO:0000255" key="3">
    <source>
        <dbReference type="PROSITE-ProRule" id="PRU01248"/>
    </source>
</evidence>
<sequence length="304" mass="35256">MANVKNFLTLFIEYLQIEKNYSKYTIVGYISSIEDFERFLHVQGIKGFEDVTYPDVRIFLTEAHEKGLTRRTISKKISALRSFYKFLLREKLVKENPFLLVSLPKQDKRIPKFLYEKELEELFEVSDLSTPLGQRNQALLEFLYATGMRVSELCSLKESDLDLFLDTVLVHGKGRKQRYIPFGSFAREALDLYLQNGRRILLLKAKEPCPFIFLNQRGGPLTPRGVRYILGELVKKTSGTLHIHPHMLRHTFATHLLNEGADLRSVQELLGHSNLSSTQVYTHVSKDMLRKTYMSHHPRAHKGK</sequence>